<dbReference type="EMBL" id="CP001096">
    <property type="protein sequence ID" value="ACF00999.1"/>
    <property type="molecule type" value="Genomic_DNA"/>
</dbReference>
<dbReference type="RefSeq" id="WP_012495741.1">
    <property type="nucleotide sequence ID" value="NC_011004.1"/>
</dbReference>
<dbReference type="SMR" id="B3QFC6"/>
<dbReference type="KEGG" id="rpt:Rpal_2485"/>
<dbReference type="HOGENOM" id="CLU_106619_2_1_5"/>
<dbReference type="OrthoDB" id="9798918at2"/>
<dbReference type="Proteomes" id="UP000001725">
    <property type="component" value="Chromosome"/>
</dbReference>
<dbReference type="CDD" id="cd18720">
    <property type="entry name" value="PIN_YqxD-like"/>
    <property type="match status" value="1"/>
</dbReference>
<dbReference type="HAMAP" id="MF_00489">
    <property type="entry name" value="UPF0178"/>
    <property type="match status" value="1"/>
</dbReference>
<dbReference type="InterPro" id="IPR003791">
    <property type="entry name" value="UPF0178"/>
</dbReference>
<dbReference type="NCBIfam" id="NF001095">
    <property type="entry name" value="PRK00124.1"/>
    <property type="match status" value="1"/>
</dbReference>
<dbReference type="PANTHER" id="PTHR35146">
    <property type="entry name" value="UPF0178 PROTEIN YAII"/>
    <property type="match status" value="1"/>
</dbReference>
<dbReference type="PANTHER" id="PTHR35146:SF1">
    <property type="entry name" value="UPF0178 PROTEIN YAII"/>
    <property type="match status" value="1"/>
</dbReference>
<dbReference type="Pfam" id="PF02639">
    <property type="entry name" value="DUF188"/>
    <property type="match status" value="1"/>
</dbReference>
<feature type="chain" id="PRO_1000126206" description="UPF0178 protein Rpal_2485">
    <location>
        <begin position="1"/>
        <end position="158"/>
    </location>
</feature>
<sequence length="158" mass="16977">MTDALTRIYVDADACPVKDEVYKVAERHHLPVTLVAGGFIRVPQHPLIERVAAGSGMDAADDWIAERIKPGDIVITADIPLASRCVKAGATAIAPNGKPFTEESIGMTLAVRNLMTDLRSTGEITGGPRAFSPRDRSTFLSALDSAIRRIARRRAAPT</sequence>
<evidence type="ECO:0000255" key="1">
    <source>
        <dbReference type="HAMAP-Rule" id="MF_00489"/>
    </source>
</evidence>
<protein>
    <recommendedName>
        <fullName evidence="1">UPF0178 protein Rpal_2485</fullName>
    </recommendedName>
</protein>
<reference key="1">
    <citation type="submission" date="2008-05" db="EMBL/GenBank/DDBJ databases">
        <title>Complete sequence of Rhodopseudomonas palustris TIE-1.</title>
        <authorList>
            <consortium name="US DOE Joint Genome Institute"/>
            <person name="Lucas S."/>
            <person name="Copeland A."/>
            <person name="Lapidus A."/>
            <person name="Glavina del Rio T."/>
            <person name="Dalin E."/>
            <person name="Tice H."/>
            <person name="Pitluck S."/>
            <person name="Chain P."/>
            <person name="Malfatti S."/>
            <person name="Shin M."/>
            <person name="Vergez L."/>
            <person name="Lang D."/>
            <person name="Schmutz J."/>
            <person name="Larimer F."/>
            <person name="Land M."/>
            <person name="Hauser L."/>
            <person name="Kyrpides N."/>
            <person name="Mikhailova N."/>
            <person name="Emerson D."/>
            <person name="Newman D.K."/>
            <person name="Roden E."/>
            <person name="Richardson P."/>
        </authorList>
    </citation>
    <scope>NUCLEOTIDE SEQUENCE [LARGE SCALE GENOMIC DNA]</scope>
    <source>
        <strain>TIE-1</strain>
    </source>
</reference>
<accession>B3QFC6</accession>
<organism>
    <name type="scientific">Rhodopseudomonas palustris (strain TIE-1)</name>
    <dbReference type="NCBI Taxonomy" id="395960"/>
    <lineage>
        <taxon>Bacteria</taxon>
        <taxon>Pseudomonadati</taxon>
        <taxon>Pseudomonadota</taxon>
        <taxon>Alphaproteobacteria</taxon>
        <taxon>Hyphomicrobiales</taxon>
        <taxon>Nitrobacteraceae</taxon>
        <taxon>Rhodopseudomonas</taxon>
    </lineage>
</organism>
<name>Y2485_RHOPT</name>
<comment type="similarity">
    <text evidence="1">Belongs to the UPF0178 family.</text>
</comment>
<gene>
    <name type="ordered locus">Rpal_2485</name>
</gene>
<proteinExistence type="inferred from homology"/>